<organism>
    <name type="scientific">Staphylococcus aureus (strain MW2)</name>
    <dbReference type="NCBI Taxonomy" id="196620"/>
    <lineage>
        <taxon>Bacteria</taxon>
        <taxon>Bacillati</taxon>
        <taxon>Bacillota</taxon>
        <taxon>Bacilli</taxon>
        <taxon>Bacillales</taxon>
        <taxon>Staphylococcaceae</taxon>
        <taxon>Staphylococcus</taxon>
    </lineage>
</organism>
<accession>Q8NY28</accession>
<gene>
    <name evidence="1" type="primary">dabA</name>
    <name type="ordered locus">MW0408</name>
</gene>
<keyword id="KW-1003">Cell membrane</keyword>
<keyword id="KW-0472">Membrane</keyword>
<keyword id="KW-0479">Metal-binding</keyword>
<keyword id="KW-0813">Transport</keyword>
<keyword id="KW-0862">Zinc</keyword>
<sequence length="901" mass="102544">MTTQLNINSVIENAKRVITPLSPISIFAARNPWEGLEADTFEDVAKWLRDVRDVDIFPNKALIESAVARGELDESVFNQLVTDMLLEHHYNIPQHYINLYIDNIKTLKDVPASYMNHSNVDVVADLLLEKSKRDMADSYHHYDVRPMSDAIIDEQGEPLSEQVNRQMIKWTKLYIDQFLSSWTMPKREQSFYHAWLHLAQHDHSFTKAQRQVIKGLPNDPKMTIESVLTHFSIDQEDYQAYVEGHLLALPGWAGMLYYRSQQHHFEQHLLTDYLAIRLVVEQLLVGDEFKSVTKDCESRSENWFKQTVASWCYYSDMPSDVLLQHDVNEIQTFIHFAATMNKNVFKNLWLIAWEMTYESQLKQKIKAGHESVAGALDVNQVNVSENDNANQPHSVLLNDTQAVDENNSELNQVGTSTKAQIAFCIDVRSEPFRRHIEAAGPFETIGIAGFFGLPIQKDAVDEQFKHDSLPVMVPPAYRIKEFADRYDMNVYRQQQQTMSSMFYTFKLMKNNVMPSLLLPELSGPFLSLSTIVNSIMPRKSRASLQKITQKWLKKPETKLTIDREFDRTSDLPVGFTEQEQIDFALQALKLMDLTEAFAPFVVLAGHASHSHNNPHHASLECGACGGASSGFNAKLLAMICNRPNVRQGLKQSGVYIPETTVFAAAEHHTSTDTLAWVYVPDTLSSIALDAYESLNDAMPMISEHANRERLDKLPTIGRVNHPVEEAQRFASDWSEVRPEWGLAKNASFIIGRRQLTKGIDLEGRTFLHNYDWRKDKDGKLLNTIISGPALVAQWINLQYYASTVAPHFYGSGNKATQTVTSGVGVMQGNASDLMYGLSWQSVMAADRTMYHSPIRLLVVVQAPDYVVARLLANNDHFARKVSNHWLRLMSVNEEGRFKSWI</sequence>
<dbReference type="EMBL" id="BA000033">
    <property type="protein sequence ID" value="BAB94273.1"/>
    <property type="molecule type" value="Genomic_DNA"/>
</dbReference>
<dbReference type="RefSeq" id="WP_000211536.1">
    <property type="nucleotide sequence ID" value="NC_003923.1"/>
</dbReference>
<dbReference type="KEGG" id="sam:MW0408"/>
<dbReference type="HOGENOM" id="CLU_009885_0_0_9"/>
<dbReference type="GO" id="GO:0005886">
    <property type="term" value="C:plasma membrane"/>
    <property type="evidence" value="ECO:0007669"/>
    <property type="project" value="UniProtKB-SubCell"/>
</dbReference>
<dbReference type="GO" id="GO:0008270">
    <property type="term" value="F:zinc ion binding"/>
    <property type="evidence" value="ECO:0007669"/>
    <property type="project" value="UniProtKB-UniRule"/>
</dbReference>
<dbReference type="HAMAP" id="MF_01871">
    <property type="entry name" value="DabA"/>
    <property type="match status" value="1"/>
</dbReference>
<dbReference type="InterPro" id="IPR018752">
    <property type="entry name" value="DabA"/>
</dbReference>
<dbReference type="PANTHER" id="PTHR38344:SF1">
    <property type="entry name" value="INORGANIC CARBON TRANSPORTER SUBUNIT DABA-RELATED"/>
    <property type="match status" value="1"/>
</dbReference>
<dbReference type="PANTHER" id="PTHR38344">
    <property type="entry name" value="UPF0753 PROTEIN AQ_863"/>
    <property type="match status" value="1"/>
</dbReference>
<dbReference type="Pfam" id="PF10070">
    <property type="entry name" value="DabA"/>
    <property type="match status" value="1"/>
</dbReference>
<proteinExistence type="inferred from homology"/>
<feature type="chain" id="PRO_0000387310" description="Probable inorganic carbon transporter subunit DabA">
    <location>
        <begin position="1"/>
        <end position="901"/>
    </location>
</feature>
<feature type="binding site" evidence="1">
    <location>
        <position position="424"/>
    </location>
    <ligand>
        <name>Zn(2+)</name>
        <dbReference type="ChEBI" id="CHEBI:29105"/>
    </ligand>
</feature>
<feature type="binding site" evidence="1">
    <location>
        <position position="426"/>
    </location>
    <ligand>
        <name>Zn(2+)</name>
        <dbReference type="ChEBI" id="CHEBI:29105"/>
    </ligand>
</feature>
<feature type="binding site" evidence="1">
    <location>
        <position position="606"/>
    </location>
    <ligand>
        <name>Zn(2+)</name>
        <dbReference type="ChEBI" id="CHEBI:29105"/>
    </ligand>
</feature>
<feature type="binding site" evidence="1">
    <location>
        <position position="621"/>
    </location>
    <ligand>
        <name>Zn(2+)</name>
        <dbReference type="ChEBI" id="CHEBI:29105"/>
    </ligand>
</feature>
<reference key="1">
    <citation type="journal article" date="2002" name="Lancet">
        <title>Genome and virulence determinants of high virulence community-acquired MRSA.</title>
        <authorList>
            <person name="Baba T."/>
            <person name="Takeuchi F."/>
            <person name="Kuroda M."/>
            <person name="Yuzawa H."/>
            <person name="Aoki K."/>
            <person name="Oguchi A."/>
            <person name="Nagai Y."/>
            <person name="Iwama N."/>
            <person name="Asano K."/>
            <person name="Naimi T."/>
            <person name="Kuroda H."/>
            <person name="Cui L."/>
            <person name="Yamamoto K."/>
            <person name="Hiramatsu K."/>
        </authorList>
    </citation>
    <scope>NUCLEOTIDE SEQUENCE [LARGE SCALE GENOMIC DNA]</scope>
    <source>
        <strain>MW2</strain>
    </source>
</reference>
<comment type="function">
    <text evidence="1">Part of an energy-coupled inorganic carbon pump.</text>
</comment>
<comment type="cofactor">
    <cofactor evidence="1">
        <name>Zn(2+)</name>
        <dbReference type="ChEBI" id="CHEBI:29105"/>
    </cofactor>
</comment>
<comment type="subunit">
    <text evidence="1">Forms a complex with DabB.</text>
</comment>
<comment type="subcellular location">
    <subcellularLocation>
        <location evidence="1">Cell membrane</location>
        <topology evidence="1">Peripheral membrane protein</topology>
    </subcellularLocation>
</comment>
<comment type="similarity">
    <text evidence="1">Belongs to the inorganic carbon transporter (TC 9.A.2) DabA family.</text>
</comment>
<name>DABA_STAAW</name>
<evidence type="ECO:0000255" key="1">
    <source>
        <dbReference type="HAMAP-Rule" id="MF_01871"/>
    </source>
</evidence>
<protein>
    <recommendedName>
        <fullName evidence="1">Probable inorganic carbon transporter subunit DabA</fullName>
    </recommendedName>
</protein>